<organism>
    <name type="scientific">Escherichia coli (strain 55989 / EAEC)</name>
    <dbReference type="NCBI Taxonomy" id="585055"/>
    <lineage>
        <taxon>Bacteria</taxon>
        <taxon>Pseudomonadati</taxon>
        <taxon>Pseudomonadota</taxon>
        <taxon>Gammaproteobacteria</taxon>
        <taxon>Enterobacterales</taxon>
        <taxon>Enterobacteriaceae</taxon>
        <taxon>Escherichia</taxon>
    </lineage>
</organism>
<protein>
    <recommendedName>
        <fullName evidence="1">HTH-type transcriptional regulator YidZ</fullName>
    </recommendedName>
</protein>
<dbReference type="EMBL" id="CU928145">
    <property type="protein sequence ID" value="CAV00774.1"/>
    <property type="molecule type" value="Genomic_DNA"/>
</dbReference>
<dbReference type="RefSeq" id="WP_000748502.1">
    <property type="nucleotide sequence ID" value="NC_011748.1"/>
</dbReference>
<dbReference type="SMR" id="B7L852"/>
<dbReference type="GeneID" id="93778452"/>
<dbReference type="KEGG" id="eck:EC55989_4181"/>
<dbReference type="HOGENOM" id="CLU_039613_39_2_6"/>
<dbReference type="Proteomes" id="UP000000746">
    <property type="component" value="Chromosome"/>
</dbReference>
<dbReference type="GO" id="GO:0003677">
    <property type="term" value="F:DNA binding"/>
    <property type="evidence" value="ECO:0007669"/>
    <property type="project" value="UniProtKB-KW"/>
</dbReference>
<dbReference type="GO" id="GO:0003700">
    <property type="term" value="F:DNA-binding transcription factor activity"/>
    <property type="evidence" value="ECO:0007669"/>
    <property type="project" value="UniProtKB-UniRule"/>
</dbReference>
<dbReference type="CDD" id="cd08417">
    <property type="entry name" value="PBP2_Nitroaromatics_like"/>
    <property type="match status" value="1"/>
</dbReference>
<dbReference type="FunFam" id="3.40.190.10:FF:000092">
    <property type="entry name" value="HTH-type transcriptional regulator YidZ"/>
    <property type="match status" value="1"/>
</dbReference>
<dbReference type="Gene3D" id="3.40.190.10">
    <property type="entry name" value="Periplasmic binding protein-like II"/>
    <property type="match status" value="2"/>
</dbReference>
<dbReference type="Gene3D" id="1.10.10.10">
    <property type="entry name" value="Winged helix-like DNA-binding domain superfamily/Winged helix DNA-binding domain"/>
    <property type="match status" value="1"/>
</dbReference>
<dbReference type="HAMAP" id="MF_01607">
    <property type="entry name" value="HTH_type_YidZ"/>
    <property type="match status" value="1"/>
</dbReference>
<dbReference type="InterPro" id="IPR050389">
    <property type="entry name" value="LysR-type_TF"/>
</dbReference>
<dbReference type="InterPro" id="IPR005119">
    <property type="entry name" value="LysR_subst-bd"/>
</dbReference>
<dbReference type="InterPro" id="IPR000847">
    <property type="entry name" value="Tscrpt_reg_HTH_LysR"/>
</dbReference>
<dbReference type="InterPro" id="IPR023746">
    <property type="entry name" value="Tscrpt_reg_YidZ"/>
</dbReference>
<dbReference type="InterPro" id="IPR036388">
    <property type="entry name" value="WH-like_DNA-bd_sf"/>
</dbReference>
<dbReference type="InterPro" id="IPR036390">
    <property type="entry name" value="WH_DNA-bd_sf"/>
</dbReference>
<dbReference type="InterPro" id="IPR037402">
    <property type="entry name" value="YidZ_PBP2"/>
</dbReference>
<dbReference type="NCBIfam" id="NF007581">
    <property type="entry name" value="PRK10216.1"/>
    <property type="match status" value="1"/>
</dbReference>
<dbReference type="PANTHER" id="PTHR30118">
    <property type="entry name" value="HTH-TYPE TRANSCRIPTIONAL REGULATOR LEUO-RELATED"/>
    <property type="match status" value="1"/>
</dbReference>
<dbReference type="PANTHER" id="PTHR30118:SF11">
    <property type="entry name" value="HTH-TYPE TRANSCRIPTIONAL REGULATOR YIDZ"/>
    <property type="match status" value="1"/>
</dbReference>
<dbReference type="Pfam" id="PF00126">
    <property type="entry name" value="HTH_1"/>
    <property type="match status" value="1"/>
</dbReference>
<dbReference type="Pfam" id="PF03466">
    <property type="entry name" value="LysR_substrate"/>
    <property type="match status" value="1"/>
</dbReference>
<dbReference type="SUPFAM" id="SSF53850">
    <property type="entry name" value="Periplasmic binding protein-like II"/>
    <property type="match status" value="1"/>
</dbReference>
<dbReference type="SUPFAM" id="SSF46785">
    <property type="entry name" value="Winged helix' DNA-binding domain"/>
    <property type="match status" value="1"/>
</dbReference>
<dbReference type="PROSITE" id="PS50931">
    <property type="entry name" value="HTH_LYSR"/>
    <property type="match status" value="1"/>
</dbReference>
<reference key="1">
    <citation type="journal article" date="2009" name="PLoS Genet.">
        <title>Organised genome dynamics in the Escherichia coli species results in highly diverse adaptive paths.</title>
        <authorList>
            <person name="Touchon M."/>
            <person name="Hoede C."/>
            <person name="Tenaillon O."/>
            <person name="Barbe V."/>
            <person name="Baeriswyl S."/>
            <person name="Bidet P."/>
            <person name="Bingen E."/>
            <person name="Bonacorsi S."/>
            <person name="Bouchier C."/>
            <person name="Bouvet O."/>
            <person name="Calteau A."/>
            <person name="Chiapello H."/>
            <person name="Clermont O."/>
            <person name="Cruveiller S."/>
            <person name="Danchin A."/>
            <person name="Diard M."/>
            <person name="Dossat C."/>
            <person name="Karoui M.E."/>
            <person name="Frapy E."/>
            <person name="Garry L."/>
            <person name="Ghigo J.M."/>
            <person name="Gilles A.M."/>
            <person name="Johnson J."/>
            <person name="Le Bouguenec C."/>
            <person name="Lescat M."/>
            <person name="Mangenot S."/>
            <person name="Martinez-Jehanne V."/>
            <person name="Matic I."/>
            <person name="Nassif X."/>
            <person name="Oztas S."/>
            <person name="Petit M.A."/>
            <person name="Pichon C."/>
            <person name="Rouy Z."/>
            <person name="Ruf C.S."/>
            <person name="Schneider D."/>
            <person name="Tourret J."/>
            <person name="Vacherie B."/>
            <person name="Vallenet D."/>
            <person name="Medigue C."/>
            <person name="Rocha E.P.C."/>
            <person name="Denamur E."/>
        </authorList>
    </citation>
    <scope>NUCLEOTIDE SEQUENCE [LARGE SCALE GENOMIC DNA]</scope>
    <source>
        <strain>55989 / EAEC</strain>
    </source>
</reference>
<sequence>MKKSITTLDLNLLLCLQLLMQERSVTKAAKRMNVTPSAVSKSLAKLRAWFDDPLFVNSPLGLSPTPLMVSMEQNLAEWMQMSNLLLDKPHHQTPRGLKFELAAESPLMMIMLNALSKRIYQRYPQATIKLRNWDYDSLDAITRGEVDIGFSGRESHPRSRELLSSLPLAIDYEVLFSDVPCVWLRKDHPALHETWNLDTFLRYPHISICWEQSDTWALDNVLQELGRERTIAMSLPEFEQSLFMAAQPDNLLLATAPRYCQYYNQLHQLPLVALPLPFDESQQKKLEVPFTLLWHKRNSHNPKIVWLRETIKNLYASMA</sequence>
<name>YIDZ_ECO55</name>
<feature type="chain" id="PRO_1000185843" description="HTH-type transcriptional regulator YidZ">
    <location>
        <begin position="1"/>
        <end position="319"/>
    </location>
</feature>
<feature type="domain" description="HTH lysR-type" evidence="1">
    <location>
        <begin position="8"/>
        <end position="65"/>
    </location>
</feature>
<feature type="DNA-binding region" description="H-T-H motif" evidence="1">
    <location>
        <begin position="25"/>
        <end position="44"/>
    </location>
</feature>
<accession>B7L852</accession>
<proteinExistence type="inferred from homology"/>
<evidence type="ECO:0000255" key="1">
    <source>
        <dbReference type="HAMAP-Rule" id="MF_01607"/>
    </source>
</evidence>
<evidence type="ECO:0000305" key="2"/>
<gene>
    <name evidence="1" type="primary">yidZ</name>
    <name type="ordered locus">EC55989_4181</name>
</gene>
<comment type="function">
    <text evidence="1">Involved in anaerobic NO protection.</text>
</comment>
<comment type="similarity">
    <text evidence="2">Belongs to the LysR transcriptional regulatory family.</text>
</comment>
<keyword id="KW-0238">DNA-binding</keyword>
<keyword id="KW-1185">Reference proteome</keyword>
<keyword id="KW-0804">Transcription</keyword>
<keyword id="KW-0805">Transcription regulation</keyword>